<sequence length="364" mass="40593">MNQHTPAAALACAGLLGYCRAGFEKELAAELDDIAAEAGLIGYVRAEPDSGYVIYETFEPTPLGSFGESTDWRRPVFARQLLPWFARVDDLPERDRATPIVEAVKASGQRFSGVMLETPDTDEAKQRSGFCKRFTEPLAKALEKAGCLRSSRAGLPVLHVLFTSATTAWLAAGQPGQCSTWPMGIPRVRMPSNAPSRSTAKLSEAFMMLLEEGERDSILRAGQRAVDLGAAPGGWTWQLVNRGLRVTAIDNGPLRDSVMATEMVEHLKADGFTWRPHRPVDWMVCDMVEQPSRIASLMAEWVATGRCRYTIFNLKLPMKRRVEAVEQCRELIRKRLASVGPYDLRIKHLYHDREEVTAFLTLKR</sequence>
<comment type="function">
    <text evidence="1">Catalyzes the 2'-O-methylation at nucleotide C2498 in 23S rRNA.</text>
</comment>
<comment type="catalytic activity">
    <reaction evidence="1">
        <text>cytidine(2498) in 23S rRNA + S-adenosyl-L-methionine = 2'-O-methylcytidine(2498) in 23S rRNA + S-adenosyl-L-homocysteine + H(+)</text>
        <dbReference type="Rhea" id="RHEA:42788"/>
        <dbReference type="Rhea" id="RHEA-COMP:10244"/>
        <dbReference type="Rhea" id="RHEA-COMP:10245"/>
        <dbReference type="ChEBI" id="CHEBI:15378"/>
        <dbReference type="ChEBI" id="CHEBI:57856"/>
        <dbReference type="ChEBI" id="CHEBI:59789"/>
        <dbReference type="ChEBI" id="CHEBI:74495"/>
        <dbReference type="ChEBI" id="CHEBI:82748"/>
        <dbReference type="EC" id="2.1.1.186"/>
    </reaction>
</comment>
<comment type="subunit">
    <text evidence="1">Monomer.</text>
</comment>
<comment type="subcellular location">
    <subcellularLocation>
        <location evidence="1">Cytoplasm</location>
    </subcellularLocation>
</comment>
<comment type="similarity">
    <text evidence="1">Belongs to the class I-like SAM-binding methyltransferase superfamily. RNA methyltransferase RlmE family. RlmM subfamily.</text>
</comment>
<comment type="sequence caution" evidence="2">
    <conflict type="erroneous initiation">
        <sequence resource="EMBL-CDS" id="ACK54402"/>
    </conflict>
</comment>
<proteinExistence type="inferred from homology"/>
<keyword id="KW-0963">Cytoplasm</keyword>
<keyword id="KW-0489">Methyltransferase</keyword>
<keyword id="KW-1185">Reference proteome</keyword>
<keyword id="KW-0698">rRNA processing</keyword>
<keyword id="KW-0949">S-adenosyl-L-methionine</keyword>
<keyword id="KW-0808">Transferase</keyword>
<gene>
    <name evidence="1" type="primary">rlmM</name>
    <name type="ordered locus">Tmz1t_1647</name>
</gene>
<evidence type="ECO:0000255" key="1">
    <source>
        <dbReference type="HAMAP-Rule" id="MF_01551"/>
    </source>
</evidence>
<evidence type="ECO:0000305" key="2"/>
<protein>
    <recommendedName>
        <fullName evidence="1">Ribosomal RNA large subunit methyltransferase M</fullName>
        <ecNumber evidence="1">2.1.1.186</ecNumber>
    </recommendedName>
    <alternativeName>
        <fullName evidence="1">23S rRNA (cytidine2498-2'-O)-methyltransferase</fullName>
    </alternativeName>
    <alternativeName>
        <fullName evidence="1">23S rRNA 2'-O-ribose methyltransferase RlmM</fullName>
    </alternativeName>
</protein>
<name>RLMM_THASP</name>
<reference key="1">
    <citation type="submission" date="2009-05" db="EMBL/GenBank/DDBJ databases">
        <title>Complete sequence of chromosome of Thauera sp. MZ1T.</title>
        <authorList>
            <consortium name="US DOE Joint Genome Institute"/>
            <person name="Lucas S."/>
            <person name="Copeland A."/>
            <person name="Lapidus A."/>
            <person name="Glavina del Rio T."/>
            <person name="Dalin E."/>
            <person name="Tice H."/>
            <person name="Bruce D."/>
            <person name="Goodwin L."/>
            <person name="Pitluck S."/>
            <person name="Sims D."/>
            <person name="Brettin T."/>
            <person name="Detter J.C."/>
            <person name="Han C."/>
            <person name="Larimer F."/>
            <person name="Land M."/>
            <person name="Hauser L."/>
            <person name="Kyrpides N."/>
            <person name="Mikhailova N."/>
            <person name="Sayler G.S."/>
        </authorList>
    </citation>
    <scope>NUCLEOTIDE SEQUENCE [LARGE SCALE GENOMIC DNA]</scope>
    <source>
        <strain>MZ1T</strain>
    </source>
</reference>
<feature type="chain" id="PRO_0000388990" description="Ribosomal RNA large subunit methyltransferase M">
    <location>
        <begin position="1"/>
        <end position="364"/>
    </location>
</feature>
<feature type="active site" description="Proton acceptor" evidence="1">
    <location>
        <position position="315"/>
    </location>
</feature>
<feature type="binding site" evidence="1">
    <location>
        <position position="198"/>
    </location>
    <ligand>
        <name>S-adenosyl-L-methionine</name>
        <dbReference type="ChEBI" id="CHEBI:59789"/>
    </ligand>
</feature>
<feature type="binding site" evidence="1">
    <location>
        <begin position="231"/>
        <end position="234"/>
    </location>
    <ligand>
        <name>S-adenosyl-L-methionine</name>
        <dbReference type="ChEBI" id="CHEBI:59789"/>
    </ligand>
</feature>
<feature type="binding site" evidence="1">
    <location>
        <position position="250"/>
    </location>
    <ligand>
        <name>S-adenosyl-L-methionine</name>
        <dbReference type="ChEBI" id="CHEBI:59789"/>
    </ligand>
</feature>
<feature type="binding site" evidence="1">
    <location>
        <position position="270"/>
    </location>
    <ligand>
        <name>S-adenosyl-L-methionine</name>
        <dbReference type="ChEBI" id="CHEBI:59789"/>
    </ligand>
</feature>
<feature type="binding site" evidence="1">
    <location>
        <position position="286"/>
    </location>
    <ligand>
        <name>S-adenosyl-L-methionine</name>
        <dbReference type="ChEBI" id="CHEBI:59789"/>
    </ligand>
</feature>
<dbReference type="EC" id="2.1.1.186" evidence="1"/>
<dbReference type="EMBL" id="CP001281">
    <property type="protein sequence ID" value="ACK54402.1"/>
    <property type="status" value="ALT_INIT"/>
    <property type="molecule type" value="Genomic_DNA"/>
</dbReference>
<dbReference type="RefSeq" id="WP_004317117.1">
    <property type="nucleotide sequence ID" value="NZ_SSFD01000121.1"/>
</dbReference>
<dbReference type="SMR" id="C4ZJM0"/>
<dbReference type="STRING" id="85643.Tmz1t_1647"/>
<dbReference type="KEGG" id="tmz:Tmz1t_1647"/>
<dbReference type="eggNOG" id="COG2933">
    <property type="taxonomic scope" value="Bacteria"/>
</dbReference>
<dbReference type="HOGENOM" id="CLU_043780_0_0_4"/>
<dbReference type="OrthoDB" id="154490at2"/>
<dbReference type="Proteomes" id="UP000002186">
    <property type="component" value="Chromosome"/>
</dbReference>
<dbReference type="GO" id="GO:0005737">
    <property type="term" value="C:cytoplasm"/>
    <property type="evidence" value="ECO:0007669"/>
    <property type="project" value="UniProtKB-SubCell"/>
</dbReference>
<dbReference type="GO" id="GO:0008757">
    <property type="term" value="F:S-adenosylmethionine-dependent methyltransferase activity"/>
    <property type="evidence" value="ECO:0007669"/>
    <property type="project" value="UniProtKB-UniRule"/>
</dbReference>
<dbReference type="GO" id="GO:0032259">
    <property type="term" value="P:methylation"/>
    <property type="evidence" value="ECO:0007669"/>
    <property type="project" value="UniProtKB-KW"/>
</dbReference>
<dbReference type="GO" id="GO:0006364">
    <property type="term" value="P:rRNA processing"/>
    <property type="evidence" value="ECO:0007669"/>
    <property type="project" value="UniProtKB-UniRule"/>
</dbReference>
<dbReference type="Gene3D" id="3.30.2300.20">
    <property type="match status" value="1"/>
</dbReference>
<dbReference type="Gene3D" id="3.30.70.2810">
    <property type="match status" value="1"/>
</dbReference>
<dbReference type="Gene3D" id="3.40.50.150">
    <property type="entry name" value="Vaccinia Virus protein VP39"/>
    <property type="match status" value="1"/>
</dbReference>
<dbReference type="HAMAP" id="MF_01551">
    <property type="entry name" value="23SrRNA_methyltr_M"/>
    <property type="match status" value="1"/>
</dbReference>
<dbReference type="InterPro" id="IPR040739">
    <property type="entry name" value="RlmM_FDX"/>
</dbReference>
<dbReference type="InterPro" id="IPR048646">
    <property type="entry name" value="RlmM_THUMP-like"/>
</dbReference>
<dbReference type="InterPro" id="IPR002877">
    <property type="entry name" value="RNA_MeTrfase_FtsJ_dom"/>
</dbReference>
<dbReference type="InterPro" id="IPR011224">
    <property type="entry name" value="rRNA_MeTrfase_M"/>
</dbReference>
<dbReference type="InterPro" id="IPR029063">
    <property type="entry name" value="SAM-dependent_MTases_sf"/>
</dbReference>
<dbReference type="NCBIfam" id="NF008734">
    <property type="entry name" value="PRK11760.1"/>
    <property type="match status" value="1"/>
</dbReference>
<dbReference type="PANTHER" id="PTHR37524">
    <property type="entry name" value="RIBOSOMAL RNA LARGE SUBUNIT METHYLTRANSFERASE M"/>
    <property type="match status" value="1"/>
</dbReference>
<dbReference type="PANTHER" id="PTHR37524:SF2">
    <property type="entry name" value="RIBOSOMAL RNA METHYLTRANSFERASE FTSJ DOMAIN-CONTAINING PROTEIN"/>
    <property type="match status" value="1"/>
</dbReference>
<dbReference type="Pfam" id="PF01728">
    <property type="entry name" value="FtsJ"/>
    <property type="match status" value="1"/>
</dbReference>
<dbReference type="Pfam" id="PF18125">
    <property type="entry name" value="RlmM_FDX"/>
    <property type="match status" value="1"/>
</dbReference>
<dbReference type="Pfam" id="PF21239">
    <property type="entry name" value="RLMM_N"/>
    <property type="match status" value="1"/>
</dbReference>
<dbReference type="PIRSF" id="PIRSF028774">
    <property type="entry name" value="UCP028774"/>
    <property type="match status" value="1"/>
</dbReference>
<dbReference type="SUPFAM" id="SSF53335">
    <property type="entry name" value="S-adenosyl-L-methionine-dependent methyltransferases"/>
    <property type="match status" value="1"/>
</dbReference>
<organism>
    <name type="scientific">Thauera aminoaromatica</name>
    <dbReference type="NCBI Taxonomy" id="164330"/>
    <lineage>
        <taxon>Bacteria</taxon>
        <taxon>Pseudomonadati</taxon>
        <taxon>Pseudomonadota</taxon>
        <taxon>Betaproteobacteria</taxon>
        <taxon>Rhodocyclales</taxon>
        <taxon>Zoogloeaceae</taxon>
        <taxon>Thauera</taxon>
    </lineage>
</organism>
<accession>C4ZJM0</accession>